<keyword id="KW-0029">Amino-acid transport</keyword>
<keyword id="KW-0472">Membrane</keyword>
<keyword id="KW-1185">Reference proteome</keyword>
<keyword id="KW-0812">Transmembrane</keyword>
<keyword id="KW-1133">Transmembrane helix</keyword>
<keyword id="KW-0813">Transport</keyword>
<evidence type="ECO:0000255" key="1"/>
<evidence type="ECO:0000256" key="2">
    <source>
        <dbReference type="SAM" id="MobiDB-lite"/>
    </source>
</evidence>
<evidence type="ECO:0000305" key="3"/>
<organism>
    <name type="scientific">Schizosaccharomyces pombe (strain 972 / ATCC 24843)</name>
    <name type="common">Fission yeast</name>
    <dbReference type="NCBI Taxonomy" id="284812"/>
    <lineage>
        <taxon>Eukaryota</taxon>
        <taxon>Fungi</taxon>
        <taxon>Dikarya</taxon>
        <taxon>Ascomycota</taxon>
        <taxon>Taphrinomycotina</taxon>
        <taxon>Schizosaccharomycetes</taxon>
        <taxon>Schizosaccharomycetales</taxon>
        <taxon>Schizosaccharomycetaceae</taxon>
        <taxon>Schizosaccharomyces</taxon>
    </lineage>
</organism>
<sequence length="580" mass="63850">MNNYGVSSIGTSLTPSPTGSIDEYTSKEVKHPEDVKVDASYEKEEVGYGELEVVPERGNLFQRWYRSFLPPEDGKPQKLKRTLTARHIQMIGIGGAIGTGVWVGSKNTLREGGAASVLICYSLVGSMVLMTVYSLGELAVAFPINGSFHTYGTRFIHPSWGFTLGWNYLASFLATYPLELITASICLQFWININSGIWITVFIALLCFVNMFGVRGYGEVEFFVSSLKVMAMVGFIICGIVIDCGGVRTDHRGYIGATIFRKNAFIHGFHGFCSVFSTAAFSYAGTEYIGIAASETKNPAKAFPKAVKQVFIRVSLFYILALFVVSLLISGRDERLTTLSATAASPFILALMDAKIRGLPHVLNAVILISVLTAANGITYTGSRTLHSMAEQGHAPKWFKYVDREGRPLLAMAFVLCFGALGYICESAQSDTVFDWLLSISNLATLFVWLSINVSYIIYRLAFKKQGKSYDEVGYHSPFGIYGACYGAFIIILVFITEFYVSIFPIGASPDAGAFFQSYLCFPVVVIVFIAHALITRQKFRKLSEIDLDTGFSKYDRLEESDKGPMTAKSLAKSVLSFCV</sequence>
<protein>
    <recommendedName>
        <fullName>Sexual differentiation process putative amino-acid permease isp5</fullName>
    </recommendedName>
</protein>
<name>ISP5_SCHPO</name>
<proteinExistence type="evidence at transcript level"/>
<reference key="1">
    <citation type="journal article" date="1994" name="Curr. Genet.">
        <title>Identification and characterization of genes induced during sexual differentiation in Schizosaccharomyces pombe.</title>
        <authorList>
            <person name="Sato S."/>
            <person name="Suzuki H."/>
            <person name="Widyastuti U."/>
            <person name="Hotta Y."/>
            <person name="Tabata S."/>
        </authorList>
    </citation>
    <scope>NUCLEOTIDE SEQUENCE [MRNA]</scope>
</reference>
<reference key="2">
    <citation type="journal article" date="2002" name="Nature">
        <title>The genome sequence of Schizosaccharomyces pombe.</title>
        <authorList>
            <person name="Wood V."/>
            <person name="Gwilliam R."/>
            <person name="Rajandream M.A."/>
            <person name="Lyne M.H."/>
            <person name="Lyne R."/>
            <person name="Stewart A."/>
            <person name="Sgouros J.G."/>
            <person name="Peat N."/>
            <person name="Hayles J."/>
            <person name="Baker S.G."/>
            <person name="Basham D."/>
            <person name="Bowman S."/>
            <person name="Brooks K."/>
            <person name="Brown D."/>
            <person name="Brown S."/>
            <person name="Chillingworth T."/>
            <person name="Churcher C.M."/>
            <person name="Collins M."/>
            <person name="Connor R."/>
            <person name="Cronin A."/>
            <person name="Davis P."/>
            <person name="Feltwell T."/>
            <person name="Fraser A."/>
            <person name="Gentles S."/>
            <person name="Goble A."/>
            <person name="Hamlin N."/>
            <person name="Harris D.E."/>
            <person name="Hidalgo J."/>
            <person name="Hodgson G."/>
            <person name="Holroyd S."/>
            <person name="Hornsby T."/>
            <person name="Howarth S."/>
            <person name="Huckle E.J."/>
            <person name="Hunt S."/>
            <person name="Jagels K."/>
            <person name="James K.D."/>
            <person name="Jones L."/>
            <person name="Jones M."/>
            <person name="Leather S."/>
            <person name="McDonald S."/>
            <person name="McLean J."/>
            <person name="Mooney P."/>
            <person name="Moule S."/>
            <person name="Mungall K.L."/>
            <person name="Murphy L.D."/>
            <person name="Niblett D."/>
            <person name="Odell C."/>
            <person name="Oliver K."/>
            <person name="O'Neil S."/>
            <person name="Pearson D."/>
            <person name="Quail M.A."/>
            <person name="Rabbinowitsch E."/>
            <person name="Rutherford K.M."/>
            <person name="Rutter S."/>
            <person name="Saunders D."/>
            <person name="Seeger K."/>
            <person name="Sharp S."/>
            <person name="Skelton J."/>
            <person name="Simmonds M.N."/>
            <person name="Squares R."/>
            <person name="Squares S."/>
            <person name="Stevens K."/>
            <person name="Taylor K."/>
            <person name="Taylor R.G."/>
            <person name="Tivey A."/>
            <person name="Walsh S.V."/>
            <person name="Warren T."/>
            <person name="Whitehead S."/>
            <person name="Woodward J.R."/>
            <person name="Volckaert G."/>
            <person name="Aert R."/>
            <person name="Robben J."/>
            <person name="Grymonprez B."/>
            <person name="Weltjens I."/>
            <person name="Vanstreels E."/>
            <person name="Rieger M."/>
            <person name="Schaefer M."/>
            <person name="Mueller-Auer S."/>
            <person name="Gabel C."/>
            <person name="Fuchs M."/>
            <person name="Duesterhoeft A."/>
            <person name="Fritzc C."/>
            <person name="Holzer E."/>
            <person name="Moestl D."/>
            <person name="Hilbert H."/>
            <person name="Borzym K."/>
            <person name="Langer I."/>
            <person name="Beck A."/>
            <person name="Lehrach H."/>
            <person name="Reinhardt R."/>
            <person name="Pohl T.M."/>
            <person name="Eger P."/>
            <person name="Zimmermann W."/>
            <person name="Wedler H."/>
            <person name="Wambutt R."/>
            <person name="Purnelle B."/>
            <person name="Goffeau A."/>
            <person name="Cadieu E."/>
            <person name="Dreano S."/>
            <person name="Gloux S."/>
            <person name="Lelaure V."/>
            <person name="Mottier S."/>
            <person name="Galibert F."/>
            <person name="Aves S.J."/>
            <person name="Xiang Z."/>
            <person name="Hunt C."/>
            <person name="Moore K."/>
            <person name="Hurst S.M."/>
            <person name="Lucas M."/>
            <person name="Rochet M."/>
            <person name="Gaillardin C."/>
            <person name="Tallada V.A."/>
            <person name="Garzon A."/>
            <person name="Thode G."/>
            <person name="Daga R.R."/>
            <person name="Cruzado L."/>
            <person name="Jimenez J."/>
            <person name="Sanchez M."/>
            <person name="del Rey F."/>
            <person name="Benito J."/>
            <person name="Dominguez A."/>
            <person name="Revuelta J.L."/>
            <person name="Moreno S."/>
            <person name="Armstrong J."/>
            <person name="Forsburg S.L."/>
            <person name="Cerutti L."/>
            <person name="Lowe T."/>
            <person name="McCombie W.R."/>
            <person name="Paulsen I."/>
            <person name="Potashkin J."/>
            <person name="Shpakovski G.V."/>
            <person name="Ussery D."/>
            <person name="Barrell B.G."/>
            <person name="Nurse P."/>
        </authorList>
    </citation>
    <scope>NUCLEOTIDE SEQUENCE [LARGE SCALE GENOMIC DNA]</scope>
    <source>
        <strain>972 / ATCC 24843</strain>
    </source>
</reference>
<comment type="subcellular location">
    <subcellularLocation>
        <location evidence="3">Membrane</location>
        <topology evidence="3">Multi-pass membrane protein</topology>
    </subcellularLocation>
</comment>
<comment type="developmental stage">
    <text>Transcribed specifically during sexual development.</text>
</comment>
<comment type="similarity">
    <text evidence="3">Belongs to the amino acid-polyamine-organocation (APC) superfamily.</text>
</comment>
<comment type="sequence caution" evidence="3">
    <conflict type="frameshift">
        <sequence resource="EMBL-CDS" id="BAA03148"/>
    </conflict>
</comment>
<feature type="chain" id="PRO_0000054167" description="Sexual differentiation process putative amino-acid permease isp5">
    <location>
        <begin position="1"/>
        <end position="580"/>
    </location>
</feature>
<feature type="transmembrane region" description="Helical" evidence="1">
    <location>
        <begin position="112"/>
        <end position="132"/>
    </location>
</feature>
<feature type="transmembrane region" description="Helical" evidence="1">
    <location>
        <begin position="189"/>
        <end position="209"/>
    </location>
</feature>
<feature type="transmembrane region" description="Helical" evidence="1">
    <location>
        <begin position="222"/>
        <end position="242"/>
    </location>
</feature>
<feature type="transmembrane region" description="Helical" evidence="1">
    <location>
        <begin position="310"/>
        <end position="330"/>
    </location>
</feature>
<feature type="transmembrane region" description="Helical" evidence="1">
    <location>
        <begin position="408"/>
        <end position="428"/>
    </location>
</feature>
<feature type="transmembrane region" description="Helical" evidence="1">
    <location>
        <begin position="432"/>
        <end position="452"/>
    </location>
</feature>
<feature type="transmembrane region" description="Helical" evidence="1">
    <location>
        <begin position="488"/>
        <end position="508"/>
    </location>
</feature>
<feature type="transmembrane region" description="Helical" evidence="1">
    <location>
        <begin position="515"/>
        <end position="535"/>
    </location>
</feature>
<feature type="region of interest" description="Disordered" evidence="2">
    <location>
        <begin position="1"/>
        <end position="30"/>
    </location>
</feature>
<feature type="compositionally biased region" description="Polar residues" evidence="2">
    <location>
        <begin position="1"/>
        <end position="19"/>
    </location>
</feature>
<dbReference type="EMBL" id="D14062">
    <property type="protein sequence ID" value="BAA03148.1"/>
    <property type="status" value="ALT_FRAME"/>
    <property type="molecule type" value="mRNA"/>
</dbReference>
<dbReference type="EMBL" id="CU329670">
    <property type="protein sequence ID" value="CAB63545.1"/>
    <property type="molecule type" value="Genomic_DNA"/>
</dbReference>
<dbReference type="PIR" id="S45492">
    <property type="entry name" value="S45492"/>
</dbReference>
<dbReference type="PIR" id="T50059">
    <property type="entry name" value="T50059"/>
</dbReference>
<dbReference type="RefSeq" id="NP_595000.1">
    <property type="nucleotide sequence ID" value="NM_001020431.2"/>
</dbReference>
<dbReference type="SMR" id="P40901"/>
<dbReference type="BioGRID" id="279464">
    <property type="interactions" value="1"/>
</dbReference>
<dbReference type="FunCoup" id="P40901">
    <property type="interactions" value="320"/>
</dbReference>
<dbReference type="STRING" id="284812.P40901"/>
<dbReference type="iPTMnet" id="P40901"/>
<dbReference type="PaxDb" id="4896-SPAC1039.09.1"/>
<dbReference type="EnsemblFungi" id="SPAC1039.09.1">
    <property type="protein sequence ID" value="SPAC1039.09.1:pep"/>
    <property type="gene ID" value="SPAC1039.09"/>
</dbReference>
<dbReference type="GeneID" id="2543028"/>
<dbReference type="KEGG" id="spo:2543028"/>
<dbReference type="PomBase" id="SPAC1039.09">
    <property type="gene designation" value="isp5"/>
</dbReference>
<dbReference type="VEuPathDB" id="FungiDB:SPAC1039.09"/>
<dbReference type="eggNOG" id="KOG1286">
    <property type="taxonomic scope" value="Eukaryota"/>
</dbReference>
<dbReference type="HOGENOM" id="CLU_007946_12_0_1"/>
<dbReference type="InParanoid" id="P40901"/>
<dbReference type="OMA" id="IYLMLQV"/>
<dbReference type="PhylomeDB" id="P40901"/>
<dbReference type="PRO" id="PR:P40901"/>
<dbReference type="Proteomes" id="UP000002485">
    <property type="component" value="Chromosome I"/>
</dbReference>
<dbReference type="GO" id="GO:0016020">
    <property type="term" value="C:membrane"/>
    <property type="evidence" value="ECO:0000318"/>
    <property type="project" value="GO_Central"/>
</dbReference>
<dbReference type="GO" id="GO:0015171">
    <property type="term" value="F:amino acid transmembrane transporter activity"/>
    <property type="evidence" value="ECO:0000318"/>
    <property type="project" value="GO_Central"/>
</dbReference>
<dbReference type="GO" id="GO:0003333">
    <property type="term" value="P:amino acid transmembrane transport"/>
    <property type="evidence" value="ECO:0000318"/>
    <property type="project" value="GO_Central"/>
</dbReference>
<dbReference type="FunFam" id="1.20.1740.10:FF:000001">
    <property type="entry name" value="Amino acid permease"/>
    <property type="match status" value="1"/>
</dbReference>
<dbReference type="Gene3D" id="1.20.1740.10">
    <property type="entry name" value="Amino acid/polyamine transporter I"/>
    <property type="match status" value="1"/>
</dbReference>
<dbReference type="InterPro" id="IPR004841">
    <property type="entry name" value="AA-permease/SLC12A_dom"/>
</dbReference>
<dbReference type="InterPro" id="IPR004840">
    <property type="entry name" value="Amino_acid_permease_CS"/>
</dbReference>
<dbReference type="InterPro" id="IPR050524">
    <property type="entry name" value="APC_YAT"/>
</dbReference>
<dbReference type="PANTHER" id="PTHR43341">
    <property type="entry name" value="AMINO ACID PERMEASE"/>
    <property type="match status" value="1"/>
</dbReference>
<dbReference type="PANTHER" id="PTHR43341:SF42">
    <property type="entry name" value="DIFFERENTIATION PROCESS PUTATIVE AMINO-ACID PERMEASE ISP5-RELATED"/>
    <property type="match status" value="1"/>
</dbReference>
<dbReference type="Pfam" id="PF00324">
    <property type="entry name" value="AA_permease"/>
    <property type="match status" value="1"/>
</dbReference>
<dbReference type="PIRSF" id="PIRSF006060">
    <property type="entry name" value="AA_transporter"/>
    <property type="match status" value="1"/>
</dbReference>
<dbReference type="PROSITE" id="PS00218">
    <property type="entry name" value="AMINO_ACID_PERMEASE_1"/>
    <property type="match status" value="1"/>
</dbReference>
<accession>P40901</accession>
<accession>Q9US32</accession>
<gene>
    <name type="primary">isp5</name>
    <name type="ORF">SPAC1039.09</name>
</gene>